<protein>
    <recommendedName>
        <fullName>NADPH oxidase activator 1</fullName>
    </recommendedName>
</protein>
<feature type="chain" id="PRO_0000314611" description="NADPH oxidase activator 1">
    <location>
        <begin position="1"/>
        <end position="446"/>
    </location>
</feature>
<feature type="repeat" description="TPR 1">
    <location>
        <begin position="7"/>
        <end position="38"/>
    </location>
</feature>
<feature type="repeat" description="TPR 2">
    <location>
        <begin position="39"/>
        <end position="71"/>
    </location>
</feature>
<feature type="repeat" description="TPR 3">
    <location>
        <begin position="73"/>
        <end position="105"/>
    </location>
</feature>
<feature type="repeat" description="TPR 4">
    <location>
        <begin position="122"/>
        <end position="155"/>
    </location>
</feature>
<feature type="domain" description="PB1" evidence="4">
    <location>
        <begin position="287"/>
        <end position="367"/>
    </location>
</feature>
<feature type="domain" description="SH3" evidence="3">
    <location>
        <begin position="371"/>
        <end position="430"/>
    </location>
</feature>
<feature type="region of interest" description="Mediates interaction with RAC1" evidence="1">
    <location>
        <begin position="1"/>
        <end position="224"/>
    </location>
</feature>
<feature type="region of interest" description="Disordered" evidence="5">
    <location>
        <begin position="213"/>
        <end position="232"/>
    </location>
</feature>
<feature type="region of interest" description="Disordered" evidence="5">
    <location>
        <begin position="252"/>
        <end position="282"/>
    </location>
</feature>
<feature type="compositionally biased region" description="Polar residues" evidence="5">
    <location>
        <begin position="217"/>
        <end position="232"/>
    </location>
</feature>
<keyword id="KW-1003">Cell membrane</keyword>
<keyword id="KW-0963">Cytoplasm</keyword>
<keyword id="KW-0472">Membrane</keyword>
<keyword id="KW-1185">Reference proteome</keyword>
<keyword id="KW-0677">Repeat</keyword>
<keyword id="KW-0728">SH3 domain</keyword>
<keyword id="KW-0802">TPR repeat</keyword>
<name>NOXA1_RAT</name>
<evidence type="ECO:0000250" key="1"/>
<evidence type="ECO:0000250" key="2">
    <source>
        <dbReference type="UniProtKB" id="Q86UR1"/>
    </source>
</evidence>
<evidence type="ECO:0000255" key="3">
    <source>
        <dbReference type="PROSITE-ProRule" id="PRU00192"/>
    </source>
</evidence>
<evidence type="ECO:0000255" key="4">
    <source>
        <dbReference type="PROSITE-ProRule" id="PRU01081"/>
    </source>
</evidence>
<evidence type="ECO:0000256" key="5">
    <source>
        <dbReference type="SAM" id="MobiDB-lite"/>
    </source>
</evidence>
<evidence type="ECO:0000269" key="6">
    <source>
    </source>
</evidence>
<evidence type="ECO:0000269" key="7">
    <source>
    </source>
</evidence>
<evidence type="ECO:0000305" key="8"/>
<comment type="function">
    <text evidence="1">Functions as an activator of NOX1, a superoxide-producing NADPH oxidase. Functions in the production of reactive oxygen species (ROS) which participate in a variety of biological processes including host defense, hormone biosynthesis, oxygen sensing and signal transduction. May also activate CYBB/gp91phox and NOX3 (By similarity).</text>
</comment>
<comment type="subunit">
    <text evidence="2 7">NOX1, NOXA1, NOXO1, RAC1 and CYBA forms a functional multimeric complex supporting ROS production. Interaction with YWHAZ prevents the interaction of NOXA1 with NOXO1 and RAC1 and its targeting to membranes, hence reducing its ability to activate NOX1. Interacts (via N-terminus) with SH3PXD2A and SH3PXD2B; the interaction is direct. Interacts with RAC1, NCF1 and NOXO1 (By similarity). Interacts with a greater affinity to NOX1 phosphorylated at 'Thr-429' (PubMed:25228390).</text>
</comment>
<comment type="subcellular location">
    <subcellularLocation>
        <location>Cytoplasm</location>
    </subcellularLocation>
    <subcellularLocation>
        <location>Cell membrane</location>
    </subcellularLocation>
    <text evidence="1">Translocation to membranes depends on NOXO1 or NCF1 and maybe RAC1.</text>
</comment>
<comment type="tissue specificity">
    <text evidence="6">Widely expressed. Detected in gastrum, spleen, uterus, small intestine, colon, inner ear, and brain.</text>
</comment>
<comment type="developmental stage">
    <text evidence="6">Expressed in embryonic kidney.</text>
</comment>
<comment type="domain">
    <text evidence="1">The SH3 domain mediates interaction with NOXO1 and NCF1 and has autoregulatory function.</text>
</comment>
<comment type="domain">
    <text evidence="1">The TPR repeats mediate interaction with RAC1.</text>
</comment>
<comment type="similarity">
    <text evidence="8">Belongs to the NCF2/NOXA1 family.</text>
</comment>
<reference key="1">
    <citation type="journal article" date="2004" name="Nature">
        <title>Genome sequence of the Brown Norway rat yields insights into mammalian evolution.</title>
        <authorList>
            <person name="Gibbs R.A."/>
            <person name="Weinstock G.M."/>
            <person name="Metzker M.L."/>
            <person name="Muzny D.M."/>
            <person name="Sodergren E.J."/>
            <person name="Scherer S."/>
            <person name="Scott G."/>
            <person name="Steffen D."/>
            <person name="Worley K.C."/>
            <person name="Burch P.E."/>
            <person name="Okwuonu G."/>
            <person name="Hines S."/>
            <person name="Lewis L."/>
            <person name="Deramo C."/>
            <person name="Delgado O."/>
            <person name="Dugan-Rocha S."/>
            <person name="Miner G."/>
            <person name="Morgan M."/>
            <person name="Hawes A."/>
            <person name="Gill R."/>
            <person name="Holt R.A."/>
            <person name="Adams M.D."/>
            <person name="Amanatides P.G."/>
            <person name="Baden-Tillson H."/>
            <person name="Barnstead M."/>
            <person name="Chin S."/>
            <person name="Evans C.A."/>
            <person name="Ferriera S."/>
            <person name="Fosler C."/>
            <person name="Glodek A."/>
            <person name="Gu Z."/>
            <person name="Jennings D."/>
            <person name="Kraft C.L."/>
            <person name="Nguyen T."/>
            <person name="Pfannkoch C.M."/>
            <person name="Sitter C."/>
            <person name="Sutton G.G."/>
            <person name="Venter J.C."/>
            <person name="Woodage T."/>
            <person name="Smith D."/>
            <person name="Lee H.-M."/>
            <person name="Gustafson E."/>
            <person name="Cahill P."/>
            <person name="Kana A."/>
            <person name="Doucette-Stamm L."/>
            <person name="Weinstock K."/>
            <person name="Fechtel K."/>
            <person name="Weiss R.B."/>
            <person name="Dunn D.M."/>
            <person name="Green E.D."/>
            <person name="Blakesley R.W."/>
            <person name="Bouffard G.G."/>
            <person name="De Jong P.J."/>
            <person name="Osoegawa K."/>
            <person name="Zhu B."/>
            <person name="Marra M."/>
            <person name="Schein J."/>
            <person name="Bosdet I."/>
            <person name="Fjell C."/>
            <person name="Jones S."/>
            <person name="Krzywinski M."/>
            <person name="Mathewson C."/>
            <person name="Siddiqui A."/>
            <person name="Wye N."/>
            <person name="McPherson J."/>
            <person name="Zhao S."/>
            <person name="Fraser C.M."/>
            <person name="Shetty J."/>
            <person name="Shatsman S."/>
            <person name="Geer K."/>
            <person name="Chen Y."/>
            <person name="Abramzon S."/>
            <person name="Nierman W.C."/>
            <person name="Havlak P.H."/>
            <person name="Chen R."/>
            <person name="Durbin K.J."/>
            <person name="Egan A."/>
            <person name="Ren Y."/>
            <person name="Song X.-Z."/>
            <person name="Li B."/>
            <person name="Liu Y."/>
            <person name="Qin X."/>
            <person name="Cawley S."/>
            <person name="Cooney A.J."/>
            <person name="D'Souza L.M."/>
            <person name="Martin K."/>
            <person name="Wu J.Q."/>
            <person name="Gonzalez-Garay M.L."/>
            <person name="Jackson A.R."/>
            <person name="Kalafus K.J."/>
            <person name="McLeod M.P."/>
            <person name="Milosavljevic A."/>
            <person name="Virk D."/>
            <person name="Volkov A."/>
            <person name="Wheeler D.A."/>
            <person name="Zhang Z."/>
            <person name="Bailey J.A."/>
            <person name="Eichler E.E."/>
            <person name="Tuzun E."/>
            <person name="Birney E."/>
            <person name="Mongin E."/>
            <person name="Ureta-Vidal A."/>
            <person name="Woodwark C."/>
            <person name="Zdobnov E."/>
            <person name="Bork P."/>
            <person name="Suyama M."/>
            <person name="Torrents D."/>
            <person name="Alexandersson M."/>
            <person name="Trask B.J."/>
            <person name="Young J.M."/>
            <person name="Huang H."/>
            <person name="Wang H."/>
            <person name="Xing H."/>
            <person name="Daniels S."/>
            <person name="Gietzen D."/>
            <person name="Schmidt J."/>
            <person name="Stevens K."/>
            <person name="Vitt U."/>
            <person name="Wingrove J."/>
            <person name="Camara F."/>
            <person name="Mar Alba M."/>
            <person name="Abril J.F."/>
            <person name="Guigo R."/>
            <person name="Smit A."/>
            <person name="Dubchak I."/>
            <person name="Rubin E.M."/>
            <person name="Couronne O."/>
            <person name="Poliakov A."/>
            <person name="Huebner N."/>
            <person name="Ganten D."/>
            <person name="Goesele C."/>
            <person name="Hummel O."/>
            <person name="Kreitler T."/>
            <person name="Lee Y.-A."/>
            <person name="Monti J."/>
            <person name="Schulz H."/>
            <person name="Zimdahl H."/>
            <person name="Himmelbauer H."/>
            <person name="Lehrach H."/>
            <person name="Jacob H.J."/>
            <person name="Bromberg S."/>
            <person name="Gullings-Handley J."/>
            <person name="Jensen-Seaman M.I."/>
            <person name="Kwitek A.E."/>
            <person name="Lazar J."/>
            <person name="Pasko D."/>
            <person name="Tonellato P.J."/>
            <person name="Twigger S."/>
            <person name="Ponting C.P."/>
            <person name="Duarte J.M."/>
            <person name="Rice S."/>
            <person name="Goodstadt L."/>
            <person name="Beatson S.A."/>
            <person name="Emes R.D."/>
            <person name="Winter E.E."/>
            <person name="Webber C."/>
            <person name="Brandt P."/>
            <person name="Nyakatura G."/>
            <person name="Adetobi M."/>
            <person name="Chiaromonte F."/>
            <person name="Elnitski L."/>
            <person name="Eswara P."/>
            <person name="Hardison R.C."/>
            <person name="Hou M."/>
            <person name="Kolbe D."/>
            <person name="Makova K."/>
            <person name="Miller W."/>
            <person name="Nekrutenko A."/>
            <person name="Riemer C."/>
            <person name="Schwartz S."/>
            <person name="Taylor J."/>
            <person name="Yang S."/>
            <person name="Zhang Y."/>
            <person name="Lindpaintner K."/>
            <person name="Andrews T.D."/>
            <person name="Caccamo M."/>
            <person name="Clamp M."/>
            <person name="Clarke L."/>
            <person name="Curwen V."/>
            <person name="Durbin R.M."/>
            <person name="Eyras E."/>
            <person name="Searle S.M."/>
            <person name="Cooper G.M."/>
            <person name="Batzoglou S."/>
            <person name="Brudno M."/>
            <person name="Sidow A."/>
            <person name="Stone E.A."/>
            <person name="Payseur B.A."/>
            <person name="Bourque G."/>
            <person name="Lopez-Otin C."/>
            <person name="Puente X.S."/>
            <person name="Chakrabarti K."/>
            <person name="Chatterji S."/>
            <person name="Dewey C."/>
            <person name="Pachter L."/>
            <person name="Bray N."/>
            <person name="Yap V.B."/>
            <person name="Caspi A."/>
            <person name="Tesler G."/>
            <person name="Pevzner P.A."/>
            <person name="Haussler D."/>
            <person name="Roskin K.M."/>
            <person name="Baertsch R."/>
            <person name="Clawson H."/>
            <person name="Furey T.S."/>
            <person name="Hinrichs A.S."/>
            <person name="Karolchik D."/>
            <person name="Kent W.J."/>
            <person name="Rosenbloom K.R."/>
            <person name="Trumbower H."/>
            <person name="Weirauch M."/>
            <person name="Cooper D.N."/>
            <person name="Stenson P.D."/>
            <person name="Ma B."/>
            <person name="Brent M."/>
            <person name="Arumugam M."/>
            <person name="Shteynberg D."/>
            <person name="Copley R.R."/>
            <person name="Taylor M.S."/>
            <person name="Riethman H."/>
            <person name="Mudunuri U."/>
            <person name="Peterson J."/>
            <person name="Guyer M."/>
            <person name="Felsenfeld A."/>
            <person name="Old S."/>
            <person name="Mockrin S."/>
            <person name="Collins F.S."/>
        </authorList>
    </citation>
    <scope>NUCLEOTIDE SEQUENCE [LARGE SCALE GENOMIC DNA]</scope>
    <source>
        <strain>Brown Norway</strain>
    </source>
</reference>
<reference key="2">
    <citation type="journal article" date="2007" name="BMC Evol. Biol.">
        <title>Molecular evolution of the reactive oxygen-generating NADPH oxidase (Nox/Duox) family of enzymes.</title>
        <authorList>
            <person name="Kawahara B.T."/>
            <person name="Quinn M.T."/>
            <person name="Lambeth J.D."/>
        </authorList>
    </citation>
    <scope>IDENTIFICATION</scope>
</reference>
<reference key="3">
    <citation type="journal article" date="2004" name="J. Biol. Chem.">
        <title>NOX3, a superoxide-generating NADPH oxidase of the inner ear.</title>
        <authorList>
            <person name="Banfi B."/>
            <person name="Malgrange B."/>
            <person name="Knisz J."/>
            <person name="Steger K."/>
            <person name="Dubois-Dauphin M."/>
            <person name="Krause K.-H."/>
        </authorList>
    </citation>
    <scope>TISSUE SPECIFICITY</scope>
    <scope>DEVELOPMENTAL STAGE</scope>
</reference>
<reference key="4">
    <citation type="journal article" date="2014" name="Circ. Res.">
        <title>Phosphorylation of Nox1 regulates association with NoxA1 activation domain.</title>
        <authorList>
            <person name="Streeter J."/>
            <person name="Schickling B.M."/>
            <person name="Jiang S."/>
            <person name="Stanic B."/>
            <person name="Thiel W.H."/>
            <person name="Gakhar L."/>
            <person name="Houtman J.C."/>
            <person name="Miller F.J. Jr."/>
        </authorList>
    </citation>
    <scope>INTERACTION WITH NOX1</scope>
</reference>
<proteinExistence type="evidence at protein level"/>
<gene>
    <name type="primary">Noxa1</name>
</gene>
<accession>A7E3N7</accession>
<sequence length="446" mass="49245">MSSLGDQIRDWHRGVLAVAREDWDSALCFFSDVREPLAKMYFNMGCVHLMAGDPEAALRAFDQAVTKDTCMAVGFLQRGVANFQLQRLQEAVSDFQLALAQLRGNAAIDYTQLGLDFKLQAWEVLYNMASVQCQAGLWTKAANTLVEAISKRPEGAQDTLEAAMDKVQKQVPLQLRQVPKGEVFQPPRRYLKHLEPMDFLGKAKVVASVIPDDHNSDIQPQQSSQVEQAGLQSSSPVCKRVLSTRGGHMSPGLWDSLLATGGPVPGPSEDSSSAEGTATKDPESLVTVTVQCHFTVPLKVPRGTDLSSFRTLLSQALLQQTQKGQFSYKARGEDRAWVPISTEDSLQSVWRNVPVSPRGLQLQCRGAWGRPVLYQVVAQYDYRAQRPEDLDFRQGDTVDVLCEVDEAWLEGHRDGRVGIFPKCFVVPAATCVEALPVPEPQPGEQH</sequence>
<dbReference type="EMBL" id="AABR03024824">
    <property type="status" value="NOT_ANNOTATED_CDS"/>
    <property type="molecule type" value="Genomic_DNA"/>
</dbReference>
<dbReference type="EMBL" id="BR000299">
    <property type="protein sequence ID" value="FAA00366.1"/>
    <property type="molecule type" value="mRNA"/>
</dbReference>
<dbReference type="RefSeq" id="NP_001093641.1">
    <property type="nucleotide sequence ID" value="NM_001100171.1"/>
</dbReference>
<dbReference type="SMR" id="A7E3N7"/>
<dbReference type="FunCoup" id="A7E3N7">
    <property type="interactions" value="18"/>
</dbReference>
<dbReference type="STRING" id="10116.ENSRNOP00000012375"/>
<dbReference type="iPTMnet" id="A7E3N7"/>
<dbReference type="PhosphoSitePlus" id="A7E3N7"/>
<dbReference type="PaxDb" id="10116-ENSRNOP00000012375"/>
<dbReference type="Ensembl" id="ENSRNOT00000012375.6">
    <property type="protein sequence ID" value="ENSRNOP00000012375.5"/>
    <property type="gene ID" value="ENSRNOG00000009286.6"/>
</dbReference>
<dbReference type="GeneID" id="311793"/>
<dbReference type="KEGG" id="rno:311793"/>
<dbReference type="UCSC" id="RGD:1306687">
    <property type="organism name" value="rat"/>
</dbReference>
<dbReference type="AGR" id="RGD:1306687"/>
<dbReference type="CTD" id="10811"/>
<dbReference type="RGD" id="1306687">
    <property type="gene designation" value="Noxa1"/>
</dbReference>
<dbReference type="eggNOG" id="KOG4225">
    <property type="taxonomic scope" value="Eukaryota"/>
</dbReference>
<dbReference type="GeneTree" id="ENSGT00530000063843"/>
<dbReference type="HOGENOM" id="CLU_041290_1_0_1"/>
<dbReference type="InParanoid" id="A7E3N7"/>
<dbReference type="OMA" id="VLYRMVA"/>
<dbReference type="OrthoDB" id="5983572at2759"/>
<dbReference type="PhylomeDB" id="A7E3N7"/>
<dbReference type="TreeFam" id="TF329087"/>
<dbReference type="Reactome" id="R-RNO-5668599">
    <property type="pathway name" value="RHO GTPases Activate NADPH Oxidases"/>
</dbReference>
<dbReference type="Reactome" id="R-RNO-9013149">
    <property type="pathway name" value="RAC1 GTPase cycle"/>
</dbReference>
<dbReference type="PRO" id="PR:A7E3N7"/>
<dbReference type="Proteomes" id="UP000002494">
    <property type="component" value="Chromosome 3"/>
</dbReference>
<dbReference type="Bgee" id="ENSRNOG00000009286">
    <property type="expression patterns" value="Expressed in colon and 5 other cell types or tissues"/>
</dbReference>
<dbReference type="GO" id="GO:0005737">
    <property type="term" value="C:cytoplasm"/>
    <property type="evidence" value="ECO:0007669"/>
    <property type="project" value="UniProtKB-SubCell"/>
</dbReference>
<dbReference type="GO" id="GO:0043020">
    <property type="term" value="C:NADPH oxidase complex"/>
    <property type="evidence" value="ECO:0000266"/>
    <property type="project" value="RGD"/>
</dbReference>
<dbReference type="GO" id="GO:0019899">
    <property type="term" value="F:enzyme binding"/>
    <property type="evidence" value="ECO:0000266"/>
    <property type="project" value="RGD"/>
</dbReference>
<dbReference type="GO" id="GO:0017124">
    <property type="term" value="F:SH3 domain binding"/>
    <property type="evidence" value="ECO:0000266"/>
    <property type="project" value="RGD"/>
</dbReference>
<dbReference type="GO" id="GO:0031267">
    <property type="term" value="F:small GTPase binding"/>
    <property type="evidence" value="ECO:0000266"/>
    <property type="project" value="RGD"/>
</dbReference>
<dbReference type="GO" id="GO:0016176">
    <property type="term" value="F:superoxide-generating NADPH oxidase activator activity"/>
    <property type="evidence" value="ECO:0000250"/>
    <property type="project" value="UniProtKB"/>
</dbReference>
<dbReference type="GO" id="GO:0010310">
    <property type="term" value="P:regulation of hydrogen peroxide metabolic process"/>
    <property type="evidence" value="ECO:0000266"/>
    <property type="project" value="RGD"/>
</dbReference>
<dbReference type="GO" id="GO:0060263">
    <property type="term" value="P:regulation of respiratory burst"/>
    <property type="evidence" value="ECO:0000266"/>
    <property type="project" value="RGD"/>
</dbReference>
<dbReference type="GO" id="GO:0042554">
    <property type="term" value="P:superoxide anion generation"/>
    <property type="evidence" value="ECO:0000318"/>
    <property type="project" value="GO_Central"/>
</dbReference>
<dbReference type="GO" id="GO:0006801">
    <property type="term" value="P:superoxide metabolic process"/>
    <property type="evidence" value="ECO:0000250"/>
    <property type="project" value="UniProtKB"/>
</dbReference>
<dbReference type="CDD" id="cd06411">
    <property type="entry name" value="PB1_p51"/>
    <property type="match status" value="1"/>
</dbReference>
<dbReference type="FunFam" id="2.30.30.40:FF:000212">
    <property type="entry name" value="NADPH oxidase activator 1"/>
    <property type="match status" value="1"/>
</dbReference>
<dbReference type="FunFam" id="1.25.40.10:FF:000017">
    <property type="entry name" value="NADPH oxidase regulator NoxR"/>
    <property type="match status" value="1"/>
</dbReference>
<dbReference type="FunFam" id="3.10.20.90:FF:000233">
    <property type="entry name" value="Predicted NADPH oxidase activator 1"/>
    <property type="match status" value="1"/>
</dbReference>
<dbReference type="Gene3D" id="3.10.20.90">
    <property type="entry name" value="Phosphatidylinositol 3-kinase Catalytic Subunit, Chain A, domain 1"/>
    <property type="match status" value="1"/>
</dbReference>
<dbReference type="Gene3D" id="2.30.30.40">
    <property type="entry name" value="SH3 Domains"/>
    <property type="match status" value="1"/>
</dbReference>
<dbReference type="Gene3D" id="1.25.40.10">
    <property type="entry name" value="Tetratricopeptide repeat domain"/>
    <property type="match status" value="1"/>
</dbReference>
<dbReference type="InterPro" id="IPR051864">
    <property type="entry name" value="NCF2_NOXA1"/>
</dbReference>
<dbReference type="InterPro" id="IPR053793">
    <property type="entry name" value="PB1-like"/>
</dbReference>
<dbReference type="InterPro" id="IPR000270">
    <property type="entry name" value="PB1_dom"/>
</dbReference>
<dbReference type="InterPro" id="IPR036028">
    <property type="entry name" value="SH3-like_dom_sf"/>
</dbReference>
<dbReference type="InterPro" id="IPR001452">
    <property type="entry name" value="SH3_domain"/>
</dbReference>
<dbReference type="InterPro" id="IPR011990">
    <property type="entry name" value="TPR-like_helical_dom_sf"/>
</dbReference>
<dbReference type="InterPro" id="IPR019734">
    <property type="entry name" value="TPR_rpt"/>
</dbReference>
<dbReference type="PANTHER" id="PTHR15175:SF4">
    <property type="entry name" value="NADPH OXIDASE ACTIVATOR 1"/>
    <property type="match status" value="1"/>
</dbReference>
<dbReference type="PANTHER" id="PTHR15175">
    <property type="entry name" value="NEUTROPHIL CYTOSOLIC FACTOR 2, NEUTROPHIL NADPH OXIDASE FACTOR 2"/>
    <property type="match status" value="1"/>
</dbReference>
<dbReference type="Pfam" id="PF00564">
    <property type="entry name" value="PB1"/>
    <property type="match status" value="1"/>
</dbReference>
<dbReference type="Pfam" id="PF00018">
    <property type="entry name" value="SH3_1"/>
    <property type="match status" value="1"/>
</dbReference>
<dbReference type="PRINTS" id="PR00499">
    <property type="entry name" value="P67PHOX"/>
</dbReference>
<dbReference type="PRINTS" id="PR00452">
    <property type="entry name" value="SH3DOMAIN"/>
</dbReference>
<dbReference type="SMART" id="SM00666">
    <property type="entry name" value="PB1"/>
    <property type="match status" value="1"/>
</dbReference>
<dbReference type="SMART" id="SM00326">
    <property type="entry name" value="SH3"/>
    <property type="match status" value="1"/>
</dbReference>
<dbReference type="SMART" id="SM00028">
    <property type="entry name" value="TPR"/>
    <property type="match status" value="3"/>
</dbReference>
<dbReference type="SUPFAM" id="SSF54277">
    <property type="entry name" value="CAD &amp; PB1 domains"/>
    <property type="match status" value="1"/>
</dbReference>
<dbReference type="SUPFAM" id="SSF50044">
    <property type="entry name" value="SH3-domain"/>
    <property type="match status" value="1"/>
</dbReference>
<dbReference type="SUPFAM" id="SSF48452">
    <property type="entry name" value="TPR-like"/>
    <property type="match status" value="1"/>
</dbReference>
<dbReference type="PROSITE" id="PS51745">
    <property type="entry name" value="PB1"/>
    <property type="match status" value="1"/>
</dbReference>
<dbReference type="PROSITE" id="PS50002">
    <property type="entry name" value="SH3"/>
    <property type="match status" value="1"/>
</dbReference>
<dbReference type="PROSITE" id="PS50005">
    <property type="entry name" value="TPR"/>
    <property type="match status" value="3"/>
</dbReference>
<dbReference type="PROSITE" id="PS50293">
    <property type="entry name" value="TPR_REGION"/>
    <property type="match status" value="1"/>
</dbReference>
<organism>
    <name type="scientific">Rattus norvegicus</name>
    <name type="common">Rat</name>
    <dbReference type="NCBI Taxonomy" id="10116"/>
    <lineage>
        <taxon>Eukaryota</taxon>
        <taxon>Metazoa</taxon>
        <taxon>Chordata</taxon>
        <taxon>Craniata</taxon>
        <taxon>Vertebrata</taxon>
        <taxon>Euteleostomi</taxon>
        <taxon>Mammalia</taxon>
        <taxon>Eutheria</taxon>
        <taxon>Euarchontoglires</taxon>
        <taxon>Glires</taxon>
        <taxon>Rodentia</taxon>
        <taxon>Myomorpha</taxon>
        <taxon>Muroidea</taxon>
        <taxon>Muridae</taxon>
        <taxon>Murinae</taxon>
        <taxon>Rattus</taxon>
    </lineage>
</organism>